<accession>Q9VTM5</accession>
<accession>B7Z0G5</accession>
<accession>Q7KUF8</accession>
<accession>Q8T013</accession>
<sequence>MAQPSARVLQSGMRLPPMPTIRELVKLYRLQARKQLSQNFLMDERLTDKIVKSAGRIDPRDLVLEVGPGPGGITRSILRRHPQRLLLVEKDPRFGETLQLLKECASPLNIQFDIHYDDILRFNIEQHIPDTSQRIHLIGNLPFAISTRLLINWLDDLAARRGAFRRIDTCMTLTFQQEVAERICAPVGGEQRCRLSVMSQVWTEPVMKFTIPGKAFVPKPQVDVGVVKLIPLKRPKTQLPFHLVERVVRHIFSMRQKYCRRGYGTLLPPEDREEVAEKLFQRAEVQDTLRPFELTVEQCLRLAEVYSEHLVTRPEVAAYDYRAPKNVEVL</sequence>
<keyword id="KW-0489">Methyltransferase</keyword>
<keyword id="KW-0496">Mitochondrion</keyword>
<keyword id="KW-1185">Reference proteome</keyword>
<keyword id="KW-0694">RNA-binding</keyword>
<keyword id="KW-0698">rRNA processing</keyword>
<keyword id="KW-0949">S-adenosyl-L-methionine</keyword>
<keyword id="KW-0808">Transferase</keyword>
<keyword id="KW-0809">Transit peptide</keyword>
<dbReference type="EC" id="2.1.1.-"/>
<dbReference type="EMBL" id="AE014296">
    <property type="protein sequence ID" value="AAF50022.2"/>
    <property type="molecule type" value="Genomic_DNA"/>
</dbReference>
<dbReference type="EMBL" id="AY069635">
    <property type="protein sequence ID" value="AAL39780.1"/>
    <property type="molecule type" value="mRNA"/>
</dbReference>
<dbReference type="RefSeq" id="NP_648499.1">
    <property type="nucleotide sequence ID" value="NM_140242.4"/>
</dbReference>
<dbReference type="SMR" id="Q9VTM5"/>
<dbReference type="BioGRID" id="1073033">
    <property type="interactions" value="2"/>
</dbReference>
<dbReference type="FunCoup" id="Q9VTM5">
    <property type="interactions" value="422"/>
</dbReference>
<dbReference type="STRING" id="7227.FBpp0291478"/>
<dbReference type="PaxDb" id="7227-FBpp0291478"/>
<dbReference type="DNASU" id="8674019"/>
<dbReference type="EnsemblMetazoa" id="FBtr0302272">
    <property type="protein sequence ID" value="FBpp0291478"/>
    <property type="gene ID" value="FBgn0261381"/>
</dbReference>
<dbReference type="GeneID" id="8674019"/>
<dbReference type="KEGG" id="dme:Dmel_CG42631"/>
<dbReference type="AGR" id="FB:FBgn0261381"/>
<dbReference type="CTD" id="8674019"/>
<dbReference type="FlyBase" id="FBgn0261381">
    <property type="gene designation" value="mtTFB1"/>
</dbReference>
<dbReference type="VEuPathDB" id="VectorBase:FBgn0261381"/>
<dbReference type="eggNOG" id="KOG0821">
    <property type="taxonomic scope" value="Eukaryota"/>
</dbReference>
<dbReference type="GeneTree" id="ENSGT00950000183142"/>
<dbReference type="HOGENOM" id="CLU_041220_7_0_1"/>
<dbReference type="InParanoid" id="Q9VTM5"/>
<dbReference type="OMA" id="RIEQPFK"/>
<dbReference type="OrthoDB" id="16079at2759"/>
<dbReference type="PhylomeDB" id="Q9VTM5"/>
<dbReference type="BioGRID-ORCS" id="8674019">
    <property type="hits" value="1 hit in 1 CRISPR screen"/>
</dbReference>
<dbReference type="GenomeRNAi" id="8674019"/>
<dbReference type="PRO" id="PR:Q9VTM5"/>
<dbReference type="Proteomes" id="UP000000803">
    <property type="component" value="Chromosome 3L"/>
</dbReference>
<dbReference type="Bgee" id="FBgn0261381">
    <property type="expression patterns" value="Expressed in seminal fluid secreting gland and 14 other cell types or tissues"/>
</dbReference>
<dbReference type="GO" id="GO:0005759">
    <property type="term" value="C:mitochondrial matrix"/>
    <property type="evidence" value="ECO:0000250"/>
    <property type="project" value="UniProtKB"/>
</dbReference>
<dbReference type="GO" id="GO:0005739">
    <property type="term" value="C:mitochondrion"/>
    <property type="evidence" value="ECO:0000314"/>
    <property type="project" value="FlyBase"/>
</dbReference>
<dbReference type="GO" id="GO:0034246">
    <property type="term" value="F:mitochondrial transcription factor activity"/>
    <property type="evidence" value="ECO:0000250"/>
    <property type="project" value="UniProtKB"/>
</dbReference>
<dbReference type="GO" id="GO:0003723">
    <property type="term" value="F:RNA binding"/>
    <property type="evidence" value="ECO:0007669"/>
    <property type="project" value="UniProtKB-KW"/>
</dbReference>
<dbReference type="GO" id="GO:0000179">
    <property type="term" value="F:rRNA (adenine-N6,N6-)-dimethyltransferase activity"/>
    <property type="evidence" value="ECO:0000318"/>
    <property type="project" value="GO_Central"/>
</dbReference>
<dbReference type="GO" id="GO:0006390">
    <property type="term" value="P:mitochondrial transcription"/>
    <property type="evidence" value="ECO:0000250"/>
    <property type="project" value="UniProtKB"/>
</dbReference>
<dbReference type="GO" id="GO:0006417">
    <property type="term" value="P:regulation of translation"/>
    <property type="evidence" value="ECO:0000315"/>
    <property type="project" value="FlyBase"/>
</dbReference>
<dbReference type="GO" id="GO:0031167">
    <property type="term" value="P:rRNA methylation"/>
    <property type="evidence" value="ECO:0000318"/>
    <property type="project" value="GO_Central"/>
</dbReference>
<dbReference type="GO" id="GO:0006391">
    <property type="term" value="P:transcription initiation at mitochondrial promoter"/>
    <property type="evidence" value="ECO:0000318"/>
    <property type="project" value="GO_Central"/>
</dbReference>
<dbReference type="CDD" id="cd02440">
    <property type="entry name" value="AdoMet_MTases"/>
    <property type="match status" value="1"/>
</dbReference>
<dbReference type="FunFam" id="1.10.8.100:FF:000006">
    <property type="entry name" value="rRNA adenine N(6)-methyltransferase"/>
    <property type="match status" value="1"/>
</dbReference>
<dbReference type="FunFam" id="3.40.50.150:FF:000485">
    <property type="entry name" value="rRNA adenine N(6)-methyltransferase"/>
    <property type="match status" value="1"/>
</dbReference>
<dbReference type="Gene3D" id="1.10.8.100">
    <property type="entry name" value="Ribosomal RNA adenine dimethylase-like, domain 2"/>
    <property type="match status" value="1"/>
</dbReference>
<dbReference type="Gene3D" id="3.40.50.150">
    <property type="entry name" value="Vaccinia Virus protein VP39"/>
    <property type="match status" value="1"/>
</dbReference>
<dbReference type="InterPro" id="IPR001737">
    <property type="entry name" value="KsgA/Erm"/>
</dbReference>
<dbReference type="InterPro" id="IPR023165">
    <property type="entry name" value="rRNA_Ade_diMease-like_C"/>
</dbReference>
<dbReference type="InterPro" id="IPR020596">
    <property type="entry name" value="rRNA_Ade_Mease_Trfase_CS"/>
</dbReference>
<dbReference type="InterPro" id="IPR020598">
    <property type="entry name" value="rRNA_Ade_methylase_Trfase_N"/>
</dbReference>
<dbReference type="InterPro" id="IPR011530">
    <property type="entry name" value="rRNA_adenine_dimethylase"/>
</dbReference>
<dbReference type="InterPro" id="IPR029063">
    <property type="entry name" value="SAM-dependent_MTases_sf"/>
</dbReference>
<dbReference type="NCBIfam" id="TIGR00755">
    <property type="entry name" value="ksgA"/>
    <property type="match status" value="1"/>
</dbReference>
<dbReference type="PANTHER" id="PTHR11727">
    <property type="entry name" value="DIMETHYLADENOSINE TRANSFERASE"/>
    <property type="match status" value="1"/>
</dbReference>
<dbReference type="PANTHER" id="PTHR11727:SF17">
    <property type="entry name" value="DIMETHYLADENOSINE TRANSFERASE 1, MITOCHONDRIAL"/>
    <property type="match status" value="1"/>
</dbReference>
<dbReference type="Pfam" id="PF00398">
    <property type="entry name" value="RrnaAD"/>
    <property type="match status" value="1"/>
</dbReference>
<dbReference type="SMART" id="SM00650">
    <property type="entry name" value="rADc"/>
    <property type="match status" value="1"/>
</dbReference>
<dbReference type="SUPFAM" id="SSF53335">
    <property type="entry name" value="S-adenosyl-L-methionine-dependent methyltransferases"/>
    <property type="match status" value="1"/>
</dbReference>
<dbReference type="PROSITE" id="PS01131">
    <property type="entry name" value="RRNA_A_DIMETH"/>
    <property type="match status" value="1"/>
</dbReference>
<dbReference type="PROSITE" id="PS51689">
    <property type="entry name" value="SAM_RNA_A_N6_MT"/>
    <property type="match status" value="1"/>
</dbReference>
<evidence type="ECO:0000250" key="1"/>
<evidence type="ECO:0000255" key="2"/>
<evidence type="ECO:0000255" key="3">
    <source>
        <dbReference type="PROSITE-ProRule" id="PRU01026"/>
    </source>
</evidence>
<evidence type="ECO:0000269" key="4">
    <source>
    </source>
</evidence>
<name>TFB1M_DROME</name>
<comment type="function">
    <text evidence="4">Probable S-adenosyl-L-methionine-dependent methyltransferase which specifically dimethylates mitochondrial 12S rRNA at the conserved stem loop. In contrast to mtTFB2, it does not have a critical role in either transcription or regulation of the copy number of mitochondrial DNA.</text>
</comment>
<comment type="subcellular location">
    <subcellularLocation>
        <location evidence="1">Mitochondrion</location>
    </subcellularLocation>
</comment>
<comment type="miscellaneous">
    <text>Encoded on a bicistronic transcript that code for two proteins mtTFB1 and CG42630.</text>
</comment>
<comment type="similarity">
    <text evidence="3">Belongs to the class I-like SAM-binding methyltransferase superfamily. rRNA adenine N(6)-methyltransferase family. KsgA subfamily.</text>
</comment>
<protein>
    <recommendedName>
        <fullName>Dimethyladenosine transferase 1, mitochondrial</fullName>
        <ecNumber>2.1.1.-</ecNumber>
    </recommendedName>
    <alternativeName>
        <fullName>Mitochondrial 12S rRNA dimethylase 1</fullName>
    </alternativeName>
    <alternativeName>
        <fullName>Mitochondrial transcription factor B1</fullName>
    </alternativeName>
    <alternativeName>
        <fullName>S-adenosylmethionine-6-N', N'-adenosyl(rRNA) dimethyltransferase 1</fullName>
    </alternativeName>
    <alternativeName>
        <fullName>d-mtTFB1</fullName>
    </alternativeName>
</protein>
<organism>
    <name type="scientific">Drosophila melanogaster</name>
    <name type="common">Fruit fly</name>
    <dbReference type="NCBI Taxonomy" id="7227"/>
    <lineage>
        <taxon>Eukaryota</taxon>
        <taxon>Metazoa</taxon>
        <taxon>Ecdysozoa</taxon>
        <taxon>Arthropoda</taxon>
        <taxon>Hexapoda</taxon>
        <taxon>Insecta</taxon>
        <taxon>Pterygota</taxon>
        <taxon>Neoptera</taxon>
        <taxon>Endopterygota</taxon>
        <taxon>Diptera</taxon>
        <taxon>Brachycera</taxon>
        <taxon>Muscomorpha</taxon>
        <taxon>Ephydroidea</taxon>
        <taxon>Drosophilidae</taxon>
        <taxon>Drosophila</taxon>
        <taxon>Sophophora</taxon>
    </lineage>
</organism>
<proteinExistence type="evidence at transcript level"/>
<feature type="transit peptide" description="Mitochondrion" evidence="2">
    <location>
        <begin position="1"/>
        <end position="84"/>
    </location>
</feature>
<feature type="chain" id="PRO_0000273183" description="Dimethyladenosine transferase 1, mitochondrial">
    <location>
        <begin position="85"/>
        <end position="330"/>
    </location>
</feature>
<feature type="binding site" evidence="1">
    <location>
        <begin position="38"/>
        <end position="41"/>
    </location>
    <ligand>
        <name>S-adenosyl-L-methionine</name>
        <dbReference type="ChEBI" id="CHEBI:59789"/>
    </ligand>
</feature>
<feature type="binding site" evidence="3">
    <location>
        <position position="39"/>
    </location>
    <ligand>
        <name>S-adenosyl-L-methionine</name>
        <dbReference type="ChEBI" id="CHEBI:59789"/>
    </ligand>
</feature>
<feature type="binding site" evidence="3">
    <location>
        <position position="41"/>
    </location>
    <ligand>
        <name>S-adenosyl-L-methionine</name>
        <dbReference type="ChEBI" id="CHEBI:59789"/>
    </ligand>
</feature>
<feature type="binding site" evidence="3">
    <location>
        <position position="67"/>
    </location>
    <ligand>
        <name>S-adenosyl-L-methionine</name>
        <dbReference type="ChEBI" id="CHEBI:59789"/>
    </ligand>
</feature>
<feature type="binding site" evidence="3">
    <location>
        <position position="89"/>
    </location>
    <ligand>
        <name>S-adenosyl-L-methionine</name>
        <dbReference type="ChEBI" id="CHEBI:59789"/>
    </ligand>
</feature>
<feature type="binding site" evidence="3">
    <location>
        <position position="118"/>
    </location>
    <ligand>
        <name>S-adenosyl-L-methionine</name>
        <dbReference type="ChEBI" id="CHEBI:59789"/>
    </ligand>
</feature>
<feature type="binding site" evidence="3">
    <location>
        <position position="140"/>
    </location>
    <ligand>
        <name>S-adenosyl-L-methionine</name>
        <dbReference type="ChEBI" id="CHEBI:59789"/>
    </ligand>
</feature>
<reference key="1">
    <citation type="journal article" date="2000" name="Science">
        <title>The genome sequence of Drosophila melanogaster.</title>
        <authorList>
            <person name="Adams M.D."/>
            <person name="Celniker S.E."/>
            <person name="Holt R.A."/>
            <person name="Evans C.A."/>
            <person name="Gocayne J.D."/>
            <person name="Amanatides P.G."/>
            <person name="Scherer S.E."/>
            <person name="Li P.W."/>
            <person name="Hoskins R.A."/>
            <person name="Galle R.F."/>
            <person name="George R.A."/>
            <person name="Lewis S.E."/>
            <person name="Richards S."/>
            <person name="Ashburner M."/>
            <person name="Henderson S.N."/>
            <person name="Sutton G.G."/>
            <person name="Wortman J.R."/>
            <person name="Yandell M.D."/>
            <person name="Zhang Q."/>
            <person name="Chen L.X."/>
            <person name="Brandon R.C."/>
            <person name="Rogers Y.-H.C."/>
            <person name="Blazej R.G."/>
            <person name="Champe M."/>
            <person name="Pfeiffer B.D."/>
            <person name="Wan K.H."/>
            <person name="Doyle C."/>
            <person name="Baxter E.G."/>
            <person name="Helt G."/>
            <person name="Nelson C.R."/>
            <person name="Miklos G.L.G."/>
            <person name="Abril J.F."/>
            <person name="Agbayani A."/>
            <person name="An H.-J."/>
            <person name="Andrews-Pfannkoch C."/>
            <person name="Baldwin D."/>
            <person name="Ballew R.M."/>
            <person name="Basu A."/>
            <person name="Baxendale J."/>
            <person name="Bayraktaroglu L."/>
            <person name="Beasley E.M."/>
            <person name="Beeson K.Y."/>
            <person name="Benos P.V."/>
            <person name="Berman B.P."/>
            <person name="Bhandari D."/>
            <person name="Bolshakov S."/>
            <person name="Borkova D."/>
            <person name="Botchan M.R."/>
            <person name="Bouck J."/>
            <person name="Brokstein P."/>
            <person name="Brottier P."/>
            <person name="Burtis K.C."/>
            <person name="Busam D.A."/>
            <person name="Butler H."/>
            <person name="Cadieu E."/>
            <person name="Center A."/>
            <person name="Chandra I."/>
            <person name="Cherry J.M."/>
            <person name="Cawley S."/>
            <person name="Dahlke C."/>
            <person name="Davenport L.B."/>
            <person name="Davies P."/>
            <person name="de Pablos B."/>
            <person name="Delcher A."/>
            <person name="Deng Z."/>
            <person name="Mays A.D."/>
            <person name="Dew I."/>
            <person name="Dietz S.M."/>
            <person name="Dodson K."/>
            <person name="Doup L.E."/>
            <person name="Downes M."/>
            <person name="Dugan-Rocha S."/>
            <person name="Dunkov B.C."/>
            <person name="Dunn P."/>
            <person name="Durbin K.J."/>
            <person name="Evangelista C.C."/>
            <person name="Ferraz C."/>
            <person name="Ferriera S."/>
            <person name="Fleischmann W."/>
            <person name="Fosler C."/>
            <person name="Gabrielian A.E."/>
            <person name="Garg N.S."/>
            <person name="Gelbart W.M."/>
            <person name="Glasser K."/>
            <person name="Glodek A."/>
            <person name="Gong F."/>
            <person name="Gorrell J.H."/>
            <person name="Gu Z."/>
            <person name="Guan P."/>
            <person name="Harris M."/>
            <person name="Harris N.L."/>
            <person name="Harvey D.A."/>
            <person name="Heiman T.J."/>
            <person name="Hernandez J.R."/>
            <person name="Houck J."/>
            <person name="Hostin D."/>
            <person name="Houston K.A."/>
            <person name="Howland T.J."/>
            <person name="Wei M.-H."/>
            <person name="Ibegwam C."/>
            <person name="Jalali M."/>
            <person name="Kalush F."/>
            <person name="Karpen G.H."/>
            <person name="Ke Z."/>
            <person name="Kennison J.A."/>
            <person name="Ketchum K.A."/>
            <person name="Kimmel B.E."/>
            <person name="Kodira C.D."/>
            <person name="Kraft C.L."/>
            <person name="Kravitz S."/>
            <person name="Kulp D."/>
            <person name="Lai Z."/>
            <person name="Lasko P."/>
            <person name="Lei Y."/>
            <person name="Levitsky A.A."/>
            <person name="Li J.H."/>
            <person name="Li Z."/>
            <person name="Liang Y."/>
            <person name="Lin X."/>
            <person name="Liu X."/>
            <person name="Mattei B."/>
            <person name="McIntosh T.C."/>
            <person name="McLeod M.P."/>
            <person name="McPherson D."/>
            <person name="Merkulov G."/>
            <person name="Milshina N.V."/>
            <person name="Mobarry C."/>
            <person name="Morris J."/>
            <person name="Moshrefi A."/>
            <person name="Mount S.M."/>
            <person name="Moy M."/>
            <person name="Murphy B."/>
            <person name="Murphy L."/>
            <person name="Muzny D.M."/>
            <person name="Nelson D.L."/>
            <person name="Nelson D.R."/>
            <person name="Nelson K.A."/>
            <person name="Nixon K."/>
            <person name="Nusskern D.R."/>
            <person name="Pacleb J.M."/>
            <person name="Palazzolo M."/>
            <person name="Pittman G.S."/>
            <person name="Pan S."/>
            <person name="Pollard J."/>
            <person name="Puri V."/>
            <person name="Reese M.G."/>
            <person name="Reinert K."/>
            <person name="Remington K."/>
            <person name="Saunders R.D.C."/>
            <person name="Scheeler F."/>
            <person name="Shen H."/>
            <person name="Shue B.C."/>
            <person name="Siden-Kiamos I."/>
            <person name="Simpson M."/>
            <person name="Skupski M.P."/>
            <person name="Smith T.J."/>
            <person name="Spier E."/>
            <person name="Spradling A.C."/>
            <person name="Stapleton M."/>
            <person name="Strong R."/>
            <person name="Sun E."/>
            <person name="Svirskas R."/>
            <person name="Tector C."/>
            <person name="Turner R."/>
            <person name="Venter E."/>
            <person name="Wang A.H."/>
            <person name="Wang X."/>
            <person name="Wang Z.-Y."/>
            <person name="Wassarman D.A."/>
            <person name="Weinstock G.M."/>
            <person name="Weissenbach J."/>
            <person name="Williams S.M."/>
            <person name="Woodage T."/>
            <person name="Worley K.C."/>
            <person name="Wu D."/>
            <person name="Yang S."/>
            <person name="Yao Q.A."/>
            <person name="Ye J."/>
            <person name="Yeh R.-F."/>
            <person name="Zaveri J.S."/>
            <person name="Zhan M."/>
            <person name="Zhang G."/>
            <person name="Zhao Q."/>
            <person name="Zheng L."/>
            <person name="Zheng X.H."/>
            <person name="Zhong F.N."/>
            <person name="Zhong W."/>
            <person name="Zhou X."/>
            <person name="Zhu S.C."/>
            <person name="Zhu X."/>
            <person name="Smith H.O."/>
            <person name="Gibbs R.A."/>
            <person name="Myers E.W."/>
            <person name="Rubin G.M."/>
            <person name="Venter J.C."/>
        </authorList>
    </citation>
    <scope>NUCLEOTIDE SEQUENCE [LARGE SCALE GENOMIC DNA]</scope>
    <source>
        <strain>Berkeley</strain>
    </source>
</reference>
<reference key="2">
    <citation type="journal article" date="2002" name="Genome Biol.">
        <title>Annotation of the Drosophila melanogaster euchromatic genome: a systematic review.</title>
        <authorList>
            <person name="Misra S."/>
            <person name="Crosby M.A."/>
            <person name="Mungall C.J."/>
            <person name="Matthews B.B."/>
            <person name="Campbell K.S."/>
            <person name="Hradecky P."/>
            <person name="Huang Y."/>
            <person name="Kaminker J.S."/>
            <person name="Millburn G.H."/>
            <person name="Prochnik S.E."/>
            <person name="Smith C.D."/>
            <person name="Tupy J.L."/>
            <person name="Whitfield E.J."/>
            <person name="Bayraktaroglu L."/>
            <person name="Berman B.P."/>
            <person name="Bettencourt B.R."/>
            <person name="Celniker S.E."/>
            <person name="de Grey A.D.N.J."/>
            <person name="Drysdale R.A."/>
            <person name="Harris N.L."/>
            <person name="Richter J."/>
            <person name="Russo S."/>
            <person name="Schroeder A.J."/>
            <person name="Shu S.Q."/>
            <person name="Stapleton M."/>
            <person name="Yamada C."/>
            <person name="Ashburner M."/>
            <person name="Gelbart W.M."/>
            <person name="Rubin G.M."/>
            <person name="Lewis S.E."/>
        </authorList>
    </citation>
    <scope>GENOME REANNOTATION</scope>
    <source>
        <strain>Berkeley</strain>
    </source>
</reference>
<reference key="3">
    <citation type="journal article" date="2002" name="Genome Biol.">
        <title>A Drosophila full-length cDNA resource.</title>
        <authorList>
            <person name="Stapleton M."/>
            <person name="Carlson J.W."/>
            <person name="Brokstein P."/>
            <person name="Yu C."/>
            <person name="Champe M."/>
            <person name="George R.A."/>
            <person name="Guarin H."/>
            <person name="Kronmiller B."/>
            <person name="Pacleb J.M."/>
            <person name="Park S."/>
            <person name="Wan K.H."/>
            <person name="Rubin G.M."/>
            <person name="Celniker S.E."/>
        </authorList>
    </citation>
    <scope>NUCLEOTIDE SEQUENCE [LARGE SCALE MRNA]</scope>
    <source>
        <strain>Berkeley</strain>
        <tissue>Embryo</tissue>
    </source>
</reference>
<reference key="4">
    <citation type="journal article" date="2005" name="J. Biol. Chem.">
        <title>Drosophila mitochondrial transcription factor B1 modulates mitochondrial translation but not transcription or DNA copy number in Schneider cells.</title>
        <authorList>
            <person name="Matsushima Y."/>
            <person name="Adan C."/>
            <person name="Garesse R."/>
            <person name="Kaguni L.S."/>
        </authorList>
    </citation>
    <scope>FUNCTION</scope>
</reference>
<gene>
    <name type="primary">mtTFB1</name>
    <name type="ORF">CG42631</name>
</gene>